<reference key="1">
    <citation type="journal article" date="2006" name="PLoS Genet.">
        <title>The complete genome sequence and comparative genome analysis of the high pathogenicity Yersinia enterocolitica strain 8081.</title>
        <authorList>
            <person name="Thomson N.R."/>
            <person name="Howard S."/>
            <person name="Wren B.W."/>
            <person name="Holden M.T.G."/>
            <person name="Crossman L."/>
            <person name="Challis G.L."/>
            <person name="Churcher C."/>
            <person name="Mungall K."/>
            <person name="Brooks K."/>
            <person name="Chillingworth T."/>
            <person name="Feltwell T."/>
            <person name="Abdellah Z."/>
            <person name="Hauser H."/>
            <person name="Jagels K."/>
            <person name="Maddison M."/>
            <person name="Moule S."/>
            <person name="Sanders M."/>
            <person name="Whitehead S."/>
            <person name="Quail M.A."/>
            <person name="Dougan G."/>
            <person name="Parkhill J."/>
            <person name="Prentice M.B."/>
        </authorList>
    </citation>
    <scope>NUCLEOTIDE SEQUENCE [LARGE SCALE GENOMIC DNA]</scope>
    <source>
        <strain>NCTC 13174 / 8081</strain>
    </source>
</reference>
<accession>A1JMQ7</accession>
<dbReference type="EMBL" id="AM286415">
    <property type="protein sequence ID" value="CAL12105.1"/>
    <property type="molecule type" value="Genomic_DNA"/>
</dbReference>
<dbReference type="RefSeq" id="WP_011816304.1">
    <property type="nucleotide sequence ID" value="NC_008800.1"/>
</dbReference>
<dbReference type="RefSeq" id="YP_001008379.1">
    <property type="nucleotide sequence ID" value="NC_008800.1"/>
</dbReference>
<dbReference type="SMR" id="A1JMQ7"/>
<dbReference type="KEGG" id="yen:YE2027"/>
<dbReference type="PATRIC" id="fig|393305.7.peg.2193"/>
<dbReference type="eggNOG" id="COG1742">
    <property type="taxonomic scope" value="Bacteria"/>
</dbReference>
<dbReference type="HOGENOM" id="CLU_117653_2_1_6"/>
<dbReference type="OrthoDB" id="123240at2"/>
<dbReference type="Proteomes" id="UP000000642">
    <property type="component" value="Chromosome"/>
</dbReference>
<dbReference type="GO" id="GO:0005886">
    <property type="term" value="C:plasma membrane"/>
    <property type="evidence" value="ECO:0007669"/>
    <property type="project" value="UniProtKB-SubCell"/>
</dbReference>
<dbReference type="HAMAP" id="MF_00010">
    <property type="entry name" value="UPF0060"/>
    <property type="match status" value="1"/>
</dbReference>
<dbReference type="InterPro" id="IPR003844">
    <property type="entry name" value="UPF0060"/>
</dbReference>
<dbReference type="NCBIfam" id="NF002586">
    <property type="entry name" value="PRK02237.1"/>
    <property type="match status" value="1"/>
</dbReference>
<dbReference type="PANTHER" id="PTHR36116">
    <property type="entry name" value="UPF0060 MEMBRANE PROTEIN YNFA"/>
    <property type="match status" value="1"/>
</dbReference>
<dbReference type="PANTHER" id="PTHR36116:SF1">
    <property type="entry name" value="UPF0060 MEMBRANE PROTEIN YNFA"/>
    <property type="match status" value="1"/>
</dbReference>
<dbReference type="Pfam" id="PF02694">
    <property type="entry name" value="UPF0060"/>
    <property type="match status" value="1"/>
</dbReference>
<dbReference type="SUPFAM" id="SSF103481">
    <property type="entry name" value="Multidrug resistance efflux transporter EmrE"/>
    <property type="match status" value="1"/>
</dbReference>
<organism>
    <name type="scientific">Yersinia enterocolitica serotype O:8 / biotype 1B (strain NCTC 13174 / 8081)</name>
    <dbReference type="NCBI Taxonomy" id="393305"/>
    <lineage>
        <taxon>Bacteria</taxon>
        <taxon>Pseudomonadati</taxon>
        <taxon>Pseudomonadota</taxon>
        <taxon>Gammaproteobacteria</taxon>
        <taxon>Enterobacterales</taxon>
        <taxon>Yersiniaceae</taxon>
        <taxon>Yersinia</taxon>
    </lineage>
</organism>
<sequence length="108" mass="11752">MLKASLLFFVTALAEIIGCFLPYLWLRKGASMWLLLPAAASLALFVWLLTLHPAASGRVYAAYGGVYVATALIWLRVVDDVKLSLFDWVGAAVALVGMLIIVAGWRVN</sequence>
<evidence type="ECO:0000255" key="1">
    <source>
        <dbReference type="HAMAP-Rule" id="MF_00010"/>
    </source>
</evidence>
<feature type="chain" id="PRO_5000201142" description="UPF0060 membrane protein YE2027">
    <location>
        <begin position="1"/>
        <end position="108"/>
    </location>
</feature>
<feature type="transmembrane region" description="Helical" evidence="1">
    <location>
        <begin position="6"/>
        <end position="26"/>
    </location>
</feature>
<feature type="transmembrane region" description="Helical" evidence="1">
    <location>
        <begin position="29"/>
        <end position="49"/>
    </location>
</feature>
<feature type="transmembrane region" description="Helical" evidence="1">
    <location>
        <begin position="59"/>
        <end position="79"/>
    </location>
</feature>
<feature type="transmembrane region" description="Helical" evidence="1">
    <location>
        <begin position="85"/>
        <end position="105"/>
    </location>
</feature>
<gene>
    <name type="ordered locus">YE2027</name>
</gene>
<proteinExistence type="inferred from homology"/>
<name>Y2027_YERE8</name>
<protein>
    <recommendedName>
        <fullName evidence="1">UPF0060 membrane protein YE2027</fullName>
    </recommendedName>
</protein>
<comment type="subcellular location">
    <subcellularLocation>
        <location evidence="1">Cell inner membrane</location>
        <topology evidence="1">Multi-pass membrane protein</topology>
    </subcellularLocation>
</comment>
<comment type="similarity">
    <text evidence="1">Belongs to the UPF0060 family.</text>
</comment>
<keyword id="KW-0997">Cell inner membrane</keyword>
<keyword id="KW-1003">Cell membrane</keyword>
<keyword id="KW-0472">Membrane</keyword>
<keyword id="KW-0812">Transmembrane</keyword>
<keyword id="KW-1133">Transmembrane helix</keyword>